<organism>
    <name type="scientific">Arabidopsis thaliana</name>
    <name type="common">Mouse-ear cress</name>
    <dbReference type="NCBI Taxonomy" id="3702"/>
    <lineage>
        <taxon>Eukaryota</taxon>
        <taxon>Viridiplantae</taxon>
        <taxon>Streptophyta</taxon>
        <taxon>Embryophyta</taxon>
        <taxon>Tracheophyta</taxon>
        <taxon>Spermatophyta</taxon>
        <taxon>Magnoliopsida</taxon>
        <taxon>eudicotyledons</taxon>
        <taxon>Gunneridae</taxon>
        <taxon>Pentapetalae</taxon>
        <taxon>rosids</taxon>
        <taxon>malvids</taxon>
        <taxon>Brassicales</taxon>
        <taxon>Brassicaceae</taxon>
        <taxon>Camelineae</taxon>
        <taxon>Arabidopsis</taxon>
    </lineage>
</organism>
<gene>
    <name type="primary">XBAT34</name>
    <name type="ordered locus">At4g14365</name>
    <name type="ORF">dl3220c</name>
    <name type="ORF">FCAALL.222</name>
</gene>
<protein>
    <recommendedName>
        <fullName>Putative E3 ubiquitin-protein ligase XBAT34</fullName>
        <ecNumber>2.3.2.27</ecNumber>
    </recommendedName>
    <alternativeName>
        <fullName>Ankyrin repeat domain and RING finger-containing protein XBAT34</fullName>
    </alternativeName>
    <alternativeName>
        <fullName>Protein XB3 homolog 4</fullName>
    </alternativeName>
    <alternativeName>
        <fullName>RING-type E3 ubiquitin transferase XBAT34</fullName>
    </alternativeName>
</protein>
<feature type="chain" id="PRO_0000395742" description="Putative E3 ubiquitin-protein ligase XBAT34">
    <location>
        <begin position="1"/>
        <end position="376"/>
    </location>
</feature>
<feature type="repeat" description="ANK 1">
    <location>
        <begin position="41"/>
        <end position="71"/>
    </location>
</feature>
<feature type="repeat" description="ANK 2">
    <location>
        <begin position="77"/>
        <end position="106"/>
    </location>
</feature>
<feature type="zinc finger region" description="RING-type" evidence="1">
    <location>
        <begin position="325"/>
        <end position="364"/>
    </location>
</feature>
<feature type="sequence conflict" description="In Ref. 6; AAM65242." evidence="3" ref="6">
    <original>V</original>
    <variation>A</variation>
    <location>
        <position position="117"/>
    </location>
</feature>
<feature type="sequence conflict" description="In Ref. 6; AAM65242." evidence="3" ref="6">
    <original>Y</original>
    <variation>F</variation>
    <location>
        <position position="123"/>
    </location>
</feature>
<feature type="sequence conflict" description="In Ref. 6; AAM65242." evidence="3" ref="6">
    <original>V</original>
    <variation>I</variation>
    <location>
        <position position="162"/>
    </location>
</feature>
<feature type="sequence conflict" description="In Ref. 6; AAM65242." evidence="3" ref="6">
    <original>A</original>
    <variation>T</variation>
    <location>
        <position position="290"/>
    </location>
</feature>
<feature type="sequence conflict" description="In Ref. 6; AAM65242." evidence="3" ref="6">
    <original>A</original>
    <variation>D</variation>
    <location>
        <position position="304"/>
    </location>
</feature>
<feature type="sequence conflict" description="In Ref. 6; AAM65242." evidence="3" ref="6">
    <original>A</original>
    <variation>D</variation>
    <location>
        <position position="309"/>
    </location>
</feature>
<feature type="sequence conflict" description="In Ref. 6; AAM65242." evidence="3" ref="6">
    <original>A</original>
    <variation>E</variation>
    <location>
        <position position="318"/>
    </location>
</feature>
<feature type="sequence conflict" description="In Ref. 6; AAM65242." evidence="3" ref="6">
    <original>S</original>
    <variation>Y</variation>
    <location>
        <position position="348"/>
    </location>
</feature>
<feature type="sequence conflict" description="In Ref. 6; AAM65242." evidence="3" ref="6">
    <original>E</original>
    <variation>K</variation>
    <location>
        <position position="354"/>
    </location>
</feature>
<dbReference type="EC" id="2.3.2.27"/>
<dbReference type="EMBL" id="DQ086842">
    <property type="protein sequence ID" value="AAZ14066.1"/>
    <property type="molecule type" value="mRNA"/>
</dbReference>
<dbReference type="EMBL" id="Z97336">
    <property type="protein sequence ID" value="CAB10215.1"/>
    <property type="status" value="ALT_SEQ"/>
    <property type="molecule type" value="Genomic_DNA"/>
</dbReference>
<dbReference type="EMBL" id="AL161538">
    <property type="protein sequence ID" value="CAB78478.1"/>
    <property type="status" value="ALT_SEQ"/>
    <property type="molecule type" value="Genomic_DNA"/>
</dbReference>
<dbReference type="EMBL" id="CP002687">
    <property type="protein sequence ID" value="AEE83429.1"/>
    <property type="molecule type" value="Genomic_DNA"/>
</dbReference>
<dbReference type="EMBL" id="AF325044">
    <property type="protein sequence ID" value="AAG40396.1"/>
    <property type="molecule type" value="mRNA"/>
</dbReference>
<dbReference type="EMBL" id="AY062788">
    <property type="protein sequence ID" value="AAL32866.1"/>
    <property type="molecule type" value="mRNA"/>
</dbReference>
<dbReference type="EMBL" id="AY081602">
    <property type="protein sequence ID" value="AAM10164.1"/>
    <property type="molecule type" value="mRNA"/>
</dbReference>
<dbReference type="EMBL" id="AY087705">
    <property type="protein sequence ID" value="AAM65242.1"/>
    <property type="molecule type" value="mRNA"/>
</dbReference>
<dbReference type="RefSeq" id="NP_567428.1">
    <property type="nucleotide sequence ID" value="NM_117514.4"/>
</dbReference>
<dbReference type="SMR" id="Q9FPH0"/>
<dbReference type="FunCoup" id="Q9FPH0">
    <property type="interactions" value="29"/>
</dbReference>
<dbReference type="STRING" id="3702.Q9FPH0"/>
<dbReference type="iPTMnet" id="Q9FPH0"/>
<dbReference type="PaxDb" id="3702-AT4G14365.1"/>
<dbReference type="ProteomicsDB" id="242776"/>
<dbReference type="EnsemblPlants" id="AT4G14365.1">
    <property type="protein sequence ID" value="AT4G14365.1"/>
    <property type="gene ID" value="AT4G14365"/>
</dbReference>
<dbReference type="GeneID" id="827080"/>
<dbReference type="Gramene" id="AT4G14365.1">
    <property type="protein sequence ID" value="AT4G14365.1"/>
    <property type="gene ID" value="AT4G14365"/>
</dbReference>
<dbReference type="KEGG" id="ath:AT4G14365"/>
<dbReference type="Araport" id="AT4G14365"/>
<dbReference type="TAIR" id="AT4G14365">
    <property type="gene designation" value="XBAT34"/>
</dbReference>
<dbReference type="eggNOG" id="ENOG502QQ81">
    <property type="taxonomic scope" value="Eukaryota"/>
</dbReference>
<dbReference type="HOGENOM" id="CLU_027253_2_0_1"/>
<dbReference type="InParanoid" id="Q9FPH0"/>
<dbReference type="OMA" id="WFSEACK"/>
<dbReference type="PhylomeDB" id="Q9FPH0"/>
<dbReference type="UniPathway" id="UPA00143"/>
<dbReference type="PRO" id="PR:Q9FPH0"/>
<dbReference type="Proteomes" id="UP000006548">
    <property type="component" value="Chromosome 4"/>
</dbReference>
<dbReference type="ExpressionAtlas" id="Q9FPH0">
    <property type="expression patterns" value="baseline and differential"/>
</dbReference>
<dbReference type="GO" id="GO:0016740">
    <property type="term" value="F:transferase activity"/>
    <property type="evidence" value="ECO:0007669"/>
    <property type="project" value="UniProtKB-KW"/>
</dbReference>
<dbReference type="GO" id="GO:0008270">
    <property type="term" value="F:zinc ion binding"/>
    <property type="evidence" value="ECO:0007669"/>
    <property type="project" value="UniProtKB-KW"/>
</dbReference>
<dbReference type="GO" id="GO:0016567">
    <property type="term" value="P:protein ubiquitination"/>
    <property type="evidence" value="ECO:0007669"/>
    <property type="project" value="UniProtKB-UniPathway"/>
</dbReference>
<dbReference type="CDD" id="cd23129">
    <property type="entry name" value="RING-HC_XBAT35-like"/>
    <property type="match status" value="1"/>
</dbReference>
<dbReference type="Gene3D" id="1.25.40.20">
    <property type="entry name" value="Ankyrin repeat-containing domain"/>
    <property type="match status" value="1"/>
</dbReference>
<dbReference type="Gene3D" id="3.30.40.10">
    <property type="entry name" value="Zinc/RING finger domain, C3HC4 (zinc finger)"/>
    <property type="match status" value="1"/>
</dbReference>
<dbReference type="InterPro" id="IPR002110">
    <property type="entry name" value="Ankyrin_rpt"/>
</dbReference>
<dbReference type="InterPro" id="IPR036770">
    <property type="entry name" value="Ankyrin_rpt-contain_sf"/>
</dbReference>
<dbReference type="InterPro" id="IPR001841">
    <property type="entry name" value="Znf_RING"/>
</dbReference>
<dbReference type="InterPro" id="IPR013083">
    <property type="entry name" value="Znf_RING/FYVE/PHD"/>
</dbReference>
<dbReference type="PANTHER" id="PTHR24171:SF9">
    <property type="entry name" value="ANKYRIN REPEAT DOMAIN-CONTAINING PROTEIN 39"/>
    <property type="match status" value="1"/>
</dbReference>
<dbReference type="PANTHER" id="PTHR24171">
    <property type="entry name" value="ANKYRIN REPEAT DOMAIN-CONTAINING PROTEIN 39-RELATED"/>
    <property type="match status" value="1"/>
</dbReference>
<dbReference type="Pfam" id="PF12796">
    <property type="entry name" value="Ank_2"/>
    <property type="match status" value="1"/>
</dbReference>
<dbReference type="Pfam" id="PF13920">
    <property type="entry name" value="zf-C3HC4_3"/>
    <property type="match status" value="1"/>
</dbReference>
<dbReference type="SMART" id="SM00248">
    <property type="entry name" value="ANK"/>
    <property type="match status" value="2"/>
</dbReference>
<dbReference type="SMART" id="SM00184">
    <property type="entry name" value="RING"/>
    <property type="match status" value="1"/>
</dbReference>
<dbReference type="SUPFAM" id="SSF48403">
    <property type="entry name" value="Ankyrin repeat"/>
    <property type="match status" value="1"/>
</dbReference>
<dbReference type="SUPFAM" id="SSF57850">
    <property type="entry name" value="RING/U-box"/>
    <property type="match status" value="1"/>
</dbReference>
<dbReference type="PROSITE" id="PS50297">
    <property type="entry name" value="ANK_REP_REGION"/>
    <property type="match status" value="1"/>
</dbReference>
<dbReference type="PROSITE" id="PS50088">
    <property type="entry name" value="ANK_REPEAT"/>
    <property type="match status" value="2"/>
</dbReference>
<dbReference type="PROSITE" id="PS50089">
    <property type="entry name" value="ZF_RING_2"/>
    <property type="match status" value="1"/>
</dbReference>
<keyword id="KW-0040">ANK repeat</keyword>
<keyword id="KW-0479">Metal-binding</keyword>
<keyword id="KW-1185">Reference proteome</keyword>
<keyword id="KW-0677">Repeat</keyword>
<keyword id="KW-0808">Transferase</keyword>
<keyword id="KW-0833">Ubl conjugation pathway</keyword>
<keyword id="KW-0862">Zinc</keyword>
<keyword id="KW-0863">Zinc-finger</keyword>
<evidence type="ECO:0000255" key="1">
    <source>
        <dbReference type="PROSITE-ProRule" id="PRU00175"/>
    </source>
</evidence>
<evidence type="ECO:0000269" key="2">
    <source>
    </source>
</evidence>
<evidence type="ECO:0000305" key="3"/>
<comment type="function">
    <text evidence="2">No E3 ubiquitin-protein ligase activity observed when associated with the E2 enzyme UBC8 in vitro.</text>
</comment>
<comment type="catalytic activity">
    <reaction>
        <text>S-ubiquitinyl-[E2 ubiquitin-conjugating enzyme]-L-cysteine + [acceptor protein]-L-lysine = [E2 ubiquitin-conjugating enzyme]-L-cysteine + N(6)-ubiquitinyl-[acceptor protein]-L-lysine.</text>
        <dbReference type="EC" id="2.3.2.27"/>
    </reaction>
</comment>
<comment type="pathway">
    <text>Protein modification; protein ubiquitination.</text>
</comment>
<comment type="sequence caution" evidence="3">
    <conflict type="erroneous gene model prediction">
        <sequence resource="EMBL-CDS" id="CAB10215"/>
    </conflict>
    <text>The predicted gene At4g14360 has been split into 2 genes: At4g14365 and At4g14360.</text>
</comment>
<comment type="sequence caution" evidence="3">
    <conflict type="erroneous gene model prediction">
        <sequence resource="EMBL-CDS" id="CAB78478"/>
    </conflict>
    <text>The predicted gene At4g14360 has been split into 2 genes: At4g14365 and At4g14360.</text>
</comment>
<name>XB34_ARATH</name>
<proteinExistence type="evidence at transcript level"/>
<sequence>MGQQQSQSKDEMLFQEVSNNNVEGIKSLHHEGAGLEGVDKLGRTPLILACTNDDLYDVAKTLLELGSNVNAYRSGCNGGTPLHHAAKRGLVHTVKLLLSHGANPLVLDDDVKTALEVARDEGYSNVVRAIESHICLFSGCMREYSGSSLLNLFAPQLLSRKVWVVVVPTGSRNPTKPLKLELVLYDSIQDAQPRMVIPLWKANLEEPKSFRCDDSVMIIDDSRSPKSMRQRRESGFISQARRWAQVDRQIRLKLAAEIKGDMKQMNWFSEACKGVPQPMNPPRFMKTSQATTTTTNVPALSDDALTRVAMSLPSPKTANKEDGLCVICVDAPSEAVCVPCGHVAGCISCLKEIENKKMGCPVCRANIDQVIKLYHV</sequence>
<reference key="1">
    <citation type="journal article" date="2005" name="Plant Physiol.">
        <title>Functional analysis of the RING-type ubiquitin ligase family of Arabidopsis.</title>
        <authorList>
            <person name="Stone S.L."/>
            <person name="Hauksdottir H."/>
            <person name="Troy A."/>
            <person name="Herschleb J."/>
            <person name="Kraft E."/>
            <person name="Callis J."/>
        </authorList>
    </citation>
    <scope>NUCLEOTIDE SEQUENCE [MRNA]</scope>
    <scope>FUNCTION</scope>
    <source>
        <strain>cv. Columbia</strain>
        <tissue>Seedling</tissue>
    </source>
</reference>
<reference key="2">
    <citation type="journal article" date="1998" name="Nature">
        <title>Analysis of 1.9 Mb of contiguous sequence from chromosome 4 of Arabidopsis thaliana.</title>
        <authorList>
            <person name="Bevan M."/>
            <person name="Bancroft I."/>
            <person name="Bent E."/>
            <person name="Love K."/>
            <person name="Goodman H.M."/>
            <person name="Dean C."/>
            <person name="Bergkamp R."/>
            <person name="Dirkse W."/>
            <person name="van Staveren M."/>
            <person name="Stiekema W."/>
            <person name="Drost L."/>
            <person name="Ridley P."/>
            <person name="Hudson S.-A."/>
            <person name="Patel K."/>
            <person name="Murphy G."/>
            <person name="Piffanelli P."/>
            <person name="Wedler H."/>
            <person name="Wedler E."/>
            <person name="Wambutt R."/>
            <person name="Weitzenegger T."/>
            <person name="Pohl T."/>
            <person name="Terryn N."/>
            <person name="Gielen J."/>
            <person name="Villarroel R."/>
            <person name="De Clercq R."/>
            <person name="van Montagu M."/>
            <person name="Lecharny A."/>
            <person name="Aubourg S."/>
            <person name="Gy I."/>
            <person name="Kreis M."/>
            <person name="Lao N."/>
            <person name="Kavanagh T."/>
            <person name="Hempel S."/>
            <person name="Kotter P."/>
            <person name="Entian K.-D."/>
            <person name="Rieger M."/>
            <person name="Schaefer M."/>
            <person name="Funk B."/>
            <person name="Mueller-Auer S."/>
            <person name="Silvey M."/>
            <person name="James R."/>
            <person name="Monfort A."/>
            <person name="Pons A."/>
            <person name="Puigdomenech P."/>
            <person name="Douka A."/>
            <person name="Voukelatou E."/>
            <person name="Milioni D."/>
            <person name="Hatzopoulos P."/>
            <person name="Piravandi E."/>
            <person name="Obermaier B."/>
            <person name="Hilbert H."/>
            <person name="Duesterhoeft A."/>
            <person name="Moores T."/>
            <person name="Jones J.D.G."/>
            <person name="Eneva T."/>
            <person name="Palme K."/>
            <person name="Benes V."/>
            <person name="Rechmann S."/>
            <person name="Ansorge W."/>
            <person name="Cooke R."/>
            <person name="Berger C."/>
            <person name="Delseny M."/>
            <person name="Voet M."/>
            <person name="Volckaert G."/>
            <person name="Mewes H.-W."/>
            <person name="Klosterman S."/>
            <person name="Schueller C."/>
            <person name="Chalwatzis N."/>
        </authorList>
    </citation>
    <scope>NUCLEOTIDE SEQUENCE [LARGE SCALE GENOMIC DNA]</scope>
    <source>
        <strain>cv. Columbia</strain>
    </source>
</reference>
<reference key="3">
    <citation type="journal article" date="1999" name="Nature">
        <title>Sequence and analysis of chromosome 4 of the plant Arabidopsis thaliana.</title>
        <authorList>
            <person name="Mayer K.F.X."/>
            <person name="Schueller C."/>
            <person name="Wambutt R."/>
            <person name="Murphy G."/>
            <person name="Volckaert G."/>
            <person name="Pohl T."/>
            <person name="Duesterhoeft A."/>
            <person name="Stiekema W."/>
            <person name="Entian K.-D."/>
            <person name="Terryn N."/>
            <person name="Harris B."/>
            <person name="Ansorge W."/>
            <person name="Brandt P."/>
            <person name="Grivell L.A."/>
            <person name="Rieger M."/>
            <person name="Weichselgartner M."/>
            <person name="de Simone V."/>
            <person name="Obermaier B."/>
            <person name="Mache R."/>
            <person name="Mueller M."/>
            <person name="Kreis M."/>
            <person name="Delseny M."/>
            <person name="Puigdomenech P."/>
            <person name="Watson M."/>
            <person name="Schmidtheini T."/>
            <person name="Reichert B."/>
            <person name="Portetelle D."/>
            <person name="Perez-Alonso M."/>
            <person name="Boutry M."/>
            <person name="Bancroft I."/>
            <person name="Vos P."/>
            <person name="Hoheisel J."/>
            <person name="Zimmermann W."/>
            <person name="Wedler H."/>
            <person name="Ridley P."/>
            <person name="Langham S.-A."/>
            <person name="McCullagh B."/>
            <person name="Bilham L."/>
            <person name="Robben J."/>
            <person name="van der Schueren J."/>
            <person name="Grymonprez B."/>
            <person name="Chuang Y.-J."/>
            <person name="Vandenbussche F."/>
            <person name="Braeken M."/>
            <person name="Weltjens I."/>
            <person name="Voet M."/>
            <person name="Bastiaens I."/>
            <person name="Aert R."/>
            <person name="Defoor E."/>
            <person name="Weitzenegger T."/>
            <person name="Bothe G."/>
            <person name="Ramsperger U."/>
            <person name="Hilbert H."/>
            <person name="Braun M."/>
            <person name="Holzer E."/>
            <person name="Brandt A."/>
            <person name="Peters S."/>
            <person name="van Staveren M."/>
            <person name="Dirkse W."/>
            <person name="Mooijman P."/>
            <person name="Klein Lankhorst R."/>
            <person name="Rose M."/>
            <person name="Hauf J."/>
            <person name="Koetter P."/>
            <person name="Berneiser S."/>
            <person name="Hempel S."/>
            <person name="Feldpausch M."/>
            <person name="Lamberth S."/>
            <person name="Van den Daele H."/>
            <person name="De Keyser A."/>
            <person name="Buysshaert C."/>
            <person name="Gielen J."/>
            <person name="Villarroel R."/>
            <person name="De Clercq R."/>
            <person name="van Montagu M."/>
            <person name="Rogers J."/>
            <person name="Cronin A."/>
            <person name="Quail M.A."/>
            <person name="Bray-Allen S."/>
            <person name="Clark L."/>
            <person name="Doggett J."/>
            <person name="Hall S."/>
            <person name="Kay M."/>
            <person name="Lennard N."/>
            <person name="McLay K."/>
            <person name="Mayes R."/>
            <person name="Pettett A."/>
            <person name="Rajandream M.A."/>
            <person name="Lyne M."/>
            <person name="Benes V."/>
            <person name="Rechmann S."/>
            <person name="Borkova D."/>
            <person name="Bloecker H."/>
            <person name="Scharfe M."/>
            <person name="Grimm M."/>
            <person name="Loehnert T.-H."/>
            <person name="Dose S."/>
            <person name="de Haan M."/>
            <person name="Maarse A.C."/>
            <person name="Schaefer M."/>
            <person name="Mueller-Auer S."/>
            <person name="Gabel C."/>
            <person name="Fuchs M."/>
            <person name="Fartmann B."/>
            <person name="Granderath K."/>
            <person name="Dauner D."/>
            <person name="Herzl A."/>
            <person name="Neumann S."/>
            <person name="Argiriou A."/>
            <person name="Vitale D."/>
            <person name="Liguori R."/>
            <person name="Piravandi E."/>
            <person name="Massenet O."/>
            <person name="Quigley F."/>
            <person name="Clabauld G."/>
            <person name="Muendlein A."/>
            <person name="Felber R."/>
            <person name="Schnabl S."/>
            <person name="Hiller R."/>
            <person name="Schmidt W."/>
            <person name="Lecharny A."/>
            <person name="Aubourg S."/>
            <person name="Chefdor F."/>
            <person name="Cooke R."/>
            <person name="Berger C."/>
            <person name="Monfort A."/>
            <person name="Casacuberta E."/>
            <person name="Gibbons T."/>
            <person name="Weber N."/>
            <person name="Vandenbol M."/>
            <person name="Bargues M."/>
            <person name="Terol J."/>
            <person name="Torres A."/>
            <person name="Perez-Perez A."/>
            <person name="Purnelle B."/>
            <person name="Bent E."/>
            <person name="Johnson S."/>
            <person name="Tacon D."/>
            <person name="Jesse T."/>
            <person name="Heijnen L."/>
            <person name="Schwarz S."/>
            <person name="Scholler P."/>
            <person name="Heber S."/>
            <person name="Francs P."/>
            <person name="Bielke C."/>
            <person name="Frishman D."/>
            <person name="Haase D."/>
            <person name="Lemcke K."/>
            <person name="Mewes H.-W."/>
            <person name="Stocker S."/>
            <person name="Zaccaria P."/>
            <person name="Bevan M."/>
            <person name="Wilson R.K."/>
            <person name="de la Bastide M."/>
            <person name="Habermann K."/>
            <person name="Parnell L."/>
            <person name="Dedhia N."/>
            <person name="Gnoj L."/>
            <person name="Schutz K."/>
            <person name="Huang E."/>
            <person name="Spiegel L."/>
            <person name="Sekhon M."/>
            <person name="Murray J."/>
            <person name="Sheet P."/>
            <person name="Cordes M."/>
            <person name="Abu-Threideh J."/>
            <person name="Stoneking T."/>
            <person name="Kalicki J."/>
            <person name="Graves T."/>
            <person name="Harmon G."/>
            <person name="Edwards J."/>
            <person name="Latreille P."/>
            <person name="Courtney L."/>
            <person name="Cloud J."/>
            <person name="Abbott A."/>
            <person name="Scott K."/>
            <person name="Johnson D."/>
            <person name="Minx P."/>
            <person name="Bentley D."/>
            <person name="Fulton B."/>
            <person name="Miller N."/>
            <person name="Greco T."/>
            <person name="Kemp K."/>
            <person name="Kramer J."/>
            <person name="Fulton L."/>
            <person name="Mardis E."/>
            <person name="Dante M."/>
            <person name="Pepin K."/>
            <person name="Hillier L.W."/>
            <person name="Nelson J."/>
            <person name="Spieth J."/>
            <person name="Ryan E."/>
            <person name="Andrews S."/>
            <person name="Geisel C."/>
            <person name="Layman D."/>
            <person name="Du H."/>
            <person name="Ali J."/>
            <person name="Berghoff A."/>
            <person name="Jones K."/>
            <person name="Drone K."/>
            <person name="Cotton M."/>
            <person name="Joshu C."/>
            <person name="Antonoiu B."/>
            <person name="Zidanic M."/>
            <person name="Strong C."/>
            <person name="Sun H."/>
            <person name="Lamar B."/>
            <person name="Yordan C."/>
            <person name="Ma P."/>
            <person name="Zhong J."/>
            <person name="Preston R."/>
            <person name="Vil D."/>
            <person name="Shekher M."/>
            <person name="Matero A."/>
            <person name="Shah R."/>
            <person name="Swaby I.K."/>
            <person name="O'Shaughnessy A."/>
            <person name="Rodriguez M."/>
            <person name="Hoffman J."/>
            <person name="Till S."/>
            <person name="Granat S."/>
            <person name="Shohdy N."/>
            <person name="Hasegawa A."/>
            <person name="Hameed A."/>
            <person name="Lodhi M."/>
            <person name="Johnson A."/>
            <person name="Chen E."/>
            <person name="Marra M.A."/>
            <person name="Martienssen R."/>
            <person name="McCombie W.R."/>
        </authorList>
    </citation>
    <scope>NUCLEOTIDE SEQUENCE [LARGE SCALE GENOMIC DNA]</scope>
    <source>
        <strain>cv. Columbia</strain>
    </source>
</reference>
<reference key="4">
    <citation type="journal article" date="2017" name="Plant J.">
        <title>Araport11: a complete reannotation of the Arabidopsis thaliana reference genome.</title>
        <authorList>
            <person name="Cheng C.Y."/>
            <person name="Krishnakumar V."/>
            <person name="Chan A.P."/>
            <person name="Thibaud-Nissen F."/>
            <person name="Schobel S."/>
            <person name="Town C.D."/>
        </authorList>
    </citation>
    <scope>GENOME REANNOTATION</scope>
    <source>
        <strain>cv. Columbia</strain>
    </source>
</reference>
<reference key="5">
    <citation type="journal article" date="2003" name="Science">
        <title>Empirical analysis of transcriptional activity in the Arabidopsis genome.</title>
        <authorList>
            <person name="Yamada K."/>
            <person name="Lim J."/>
            <person name="Dale J.M."/>
            <person name="Chen H."/>
            <person name="Shinn P."/>
            <person name="Palm C.J."/>
            <person name="Southwick A.M."/>
            <person name="Wu H.C."/>
            <person name="Kim C.J."/>
            <person name="Nguyen M."/>
            <person name="Pham P.K."/>
            <person name="Cheuk R.F."/>
            <person name="Karlin-Newmann G."/>
            <person name="Liu S.X."/>
            <person name="Lam B."/>
            <person name="Sakano H."/>
            <person name="Wu T."/>
            <person name="Yu G."/>
            <person name="Miranda M."/>
            <person name="Quach H.L."/>
            <person name="Tripp M."/>
            <person name="Chang C.H."/>
            <person name="Lee J.M."/>
            <person name="Toriumi M.J."/>
            <person name="Chan M.M."/>
            <person name="Tang C.C."/>
            <person name="Onodera C.S."/>
            <person name="Deng J.M."/>
            <person name="Akiyama K."/>
            <person name="Ansari Y."/>
            <person name="Arakawa T."/>
            <person name="Banh J."/>
            <person name="Banno F."/>
            <person name="Bowser L."/>
            <person name="Brooks S.Y."/>
            <person name="Carninci P."/>
            <person name="Chao Q."/>
            <person name="Choy N."/>
            <person name="Enju A."/>
            <person name="Goldsmith A.D."/>
            <person name="Gurjal M."/>
            <person name="Hansen N.F."/>
            <person name="Hayashizaki Y."/>
            <person name="Johnson-Hopson C."/>
            <person name="Hsuan V.W."/>
            <person name="Iida K."/>
            <person name="Karnes M."/>
            <person name="Khan S."/>
            <person name="Koesema E."/>
            <person name="Ishida J."/>
            <person name="Jiang P.X."/>
            <person name="Jones T."/>
            <person name="Kawai J."/>
            <person name="Kamiya A."/>
            <person name="Meyers C."/>
            <person name="Nakajima M."/>
            <person name="Narusaka M."/>
            <person name="Seki M."/>
            <person name="Sakurai T."/>
            <person name="Satou M."/>
            <person name="Tamse R."/>
            <person name="Vaysberg M."/>
            <person name="Wallender E.K."/>
            <person name="Wong C."/>
            <person name="Yamamura Y."/>
            <person name="Yuan S."/>
            <person name="Shinozaki K."/>
            <person name="Davis R.W."/>
            <person name="Theologis A."/>
            <person name="Ecker J.R."/>
        </authorList>
    </citation>
    <scope>NUCLEOTIDE SEQUENCE [LARGE SCALE MRNA]</scope>
    <source>
        <strain>cv. Columbia</strain>
    </source>
</reference>
<reference key="6">
    <citation type="submission" date="2002-03" db="EMBL/GenBank/DDBJ databases">
        <title>Full-length cDNA from Arabidopsis thaliana.</title>
        <authorList>
            <person name="Brover V.V."/>
            <person name="Troukhan M.E."/>
            <person name="Alexandrov N.A."/>
            <person name="Lu Y.-P."/>
            <person name="Flavell R.B."/>
            <person name="Feldmann K.A."/>
        </authorList>
    </citation>
    <scope>NUCLEOTIDE SEQUENCE [LARGE SCALE MRNA]</scope>
</reference>
<accession>Q9FPH0</accession>
<accession>Q8LAN6</accession>